<proteinExistence type="evidence at protein level"/>
<feature type="initiator methionine" description="Removed" evidence="2">
    <location>
        <position position="1"/>
    </location>
</feature>
<feature type="chain" id="PRO_0000129780" description="Small ribosomal subunit protein uS19">
    <location>
        <begin position="2"/>
        <end position="92"/>
    </location>
</feature>
<feature type="sequence conflict" description="In Ref. 4; AA sequence." evidence="3" ref="4">
    <original>D</original>
    <variation>N</variation>
    <location>
        <position position="12"/>
    </location>
</feature>
<feature type="helix" evidence="6">
    <location>
        <begin position="13"/>
        <end position="24"/>
    </location>
</feature>
<feature type="strand" evidence="6">
    <location>
        <begin position="31"/>
        <end position="34"/>
    </location>
</feature>
<feature type="helix" evidence="6">
    <location>
        <begin position="42"/>
        <end position="44"/>
    </location>
</feature>
<feature type="strand" evidence="6">
    <location>
        <begin position="48"/>
        <end position="52"/>
    </location>
</feature>
<feature type="strand" evidence="6">
    <location>
        <begin position="54"/>
        <end position="61"/>
    </location>
</feature>
<feature type="turn" evidence="6">
    <location>
        <begin position="65"/>
        <end position="68"/>
    </location>
</feature>
<feature type="helix" evidence="6">
    <location>
        <begin position="71"/>
        <end position="74"/>
    </location>
</feature>
<reference key="1">
    <citation type="journal article" date="1997" name="J. Bacteriol.">
        <title>Analysis of the Bacillus subtilis S10 ribosomal protein gene cluster identifies two promoters that may be responsible for transcription of the entire 15-kilobase S10-spc-alpha cluster.</title>
        <authorList>
            <person name="Li X."/>
            <person name="Lindahl L."/>
            <person name="Sha Y."/>
            <person name="Zengel J.M."/>
        </authorList>
    </citation>
    <scope>NUCLEOTIDE SEQUENCE [GENOMIC DNA]</scope>
    <source>
        <strain>SG38</strain>
    </source>
</reference>
<reference key="2">
    <citation type="journal article" date="1996" name="Microbiology">
        <title>Sequence analysis of a 50 kb region between spo0H and rrnH on the Bacillus subtilis chromosome.</title>
        <authorList>
            <person name="Yasumoto K."/>
            <person name="Liu H."/>
            <person name="Jeong S.M."/>
            <person name="Ohashi Y."/>
            <person name="Kakinuma S."/>
            <person name="Tanaka K."/>
            <person name="Kawamura F."/>
            <person name="Yoshikawa H."/>
            <person name="Takahashi H."/>
        </authorList>
    </citation>
    <scope>NUCLEOTIDE SEQUENCE [GENOMIC DNA]</scope>
    <source>
        <strain>168</strain>
    </source>
</reference>
<reference key="3">
    <citation type="journal article" date="1997" name="Nature">
        <title>The complete genome sequence of the Gram-positive bacterium Bacillus subtilis.</title>
        <authorList>
            <person name="Kunst F."/>
            <person name="Ogasawara N."/>
            <person name="Moszer I."/>
            <person name="Albertini A.M."/>
            <person name="Alloni G."/>
            <person name="Azevedo V."/>
            <person name="Bertero M.G."/>
            <person name="Bessieres P."/>
            <person name="Bolotin A."/>
            <person name="Borchert S."/>
            <person name="Borriss R."/>
            <person name="Boursier L."/>
            <person name="Brans A."/>
            <person name="Braun M."/>
            <person name="Brignell S.C."/>
            <person name="Bron S."/>
            <person name="Brouillet S."/>
            <person name="Bruschi C.V."/>
            <person name="Caldwell B."/>
            <person name="Capuano V."/>
            <person name="Carter N.M."/>
            <person name="Choi S.-K."/>
            <person name="Codani J.-J."/>
            <person name="Connerton I.F."/>
            <person name="Cummings N.J."/>
            <person name="Daniel R.A."/>
            <person name="Denizot F."/>
            <person name="Devine K.M."/>
            <person name="Duesterhoeft A."/>
            <person name="Ehrlich S.D."/>
            <person name="Emmerson P.T."/>
            <person name="Entian K.-D."/>
            <person name="Errington J."/>
            <person name="Fabret C."/>
            <person name="Ferrari E."/>
            <person name="Foulger D."/>
            <person name="Fritz C."/>
            <person name="Fujita M."/>
            <person name="Fujita Y."/>
            <person name="Fuma S."/>
            <person name="Galizzi A."/>
            <person name="Galleron N."/>
            <person name="Ghim S.-Y."/>
            <person name="Glaser P."/>
            <person name="Goffeau A."/>
            <person name="Golightly E.J."/>
            <person name="Grandi G."/>
            <person name="Guiseppi G."/>
            <person name="Guy B.J."/>
            <person name="Haga K."/>
            <person name="Haiech J."/>
            <person name="Harwood C.R."/>
            <person name="Henaut A."/>
            <person name="Hilbert H."/>
            <person name="Holsappel S."/>
            <person name="Hosono S."/>
            <person name="Hullo M.-F."/>
            <person name="Itaya M."/>
            <person name="Jones L.-M."/>
            <person name="Joris B."/>
            <person name="Karamata D."/>
            <person name="Kasahara Y."/>
            <person name="Klaerr-Blanchard M."/>
            <person name="Klein C."/>
            <person name="Kobayashi Y."/>
            <person name="Koetter P."/>
            <person name="Koningstein G."/>
            <person name="Krogh S."/>
            <person name="Kumano M."/>
            <person name="Kurita K."/>
            <person name="Lapidus A."/>
            <person name="Lardinois S."/>
            <person name="Lauber J."/>
            <person name="Lazarevic V."/>
            <person name="Lee S.-M."/>
            <person name="Levine A."/>
            <person name="Liu H."/>
            <person name="Masuda S."/>
            <person name="Mauel C."/>
            <person name="Medigue C."/>
            <person name="Medina N."/>
            <person name="Mellado R.P."/>
            <person name="Mizuno M."/>
            <person name="Moestl D."/>
            <person name="Nakai S."/>
            <person name="Noback M."/>
            <person name="Noone D."/>
            <person name="O'Reilly M."/>
            <person name="Ogawa K."/>
            <person name="Ogiwara A."/>
            <person name="Oudega B."/>
            <person name="Park S.-H."/>
            <person name="Parro V."/>
            <person name="Pohl T.M."/>
            <person name="Portetelle D."/>
            <person name="Porwollik S."/>
            <person name="Prescott A.M."/>
            <person name="Presecan E."/>
            <person name="Pujic P."/>
            <person name="Purnelle B."/>
            <person name="Rapoport G."/>
            <person name="Rey M."/>
            <person name="Reynolds S."/>
            <person name="Rieger M."/>
            <person name="Rivolta C."/>
            <person name="Rocha E."/>
            <person name="Roche B."/>
            <person name="Rose M."/>
            <person name="Sadaie Y."/>
            <person name="Sato T."/>
            <person name="Scanlan E."/>
            <person name="Schleich S."/>
            <person name="Schroeter R."/>
            <person name="Scoffone F."/>
            <person name="Sekiguchi J."/>
            <person name="Sekowska A."/>
            <person name="Seror S.J."/>
            <person name="Serror P."/>
            <person name="Shin B.-S."/>
            <person name="Soldo B."/>
            <person name="Sorokin A."/>
            <person name="Tacconi E."/>
            <person name="Takagi T."/>
            <person name="Takahashi H."/>
            <person name="Takemaru K."/>
            <person name="Takeuchi M."/>
            <person name="Tamakoshi A."/>
            <person name="Tanaka T."/>
            <person name="Terpstra P."/>
            <person name="Tognoni A."/>
            <person name="Tosato V."/>
            <person name="Uchiyama S."/>
            <person name="Vandenbol M."/>
            <person name="Vannier F."/>
            <person name="Vassarotti A."/>
            <person name="Viari A."/>
            <person name="Wambutt R."/>
            <person name="Wedler E."/>
            <person name="Wedler H."/>
            <person name="Weitzenegger T."/>
            <person name="Winters P."/>
            <person name="Wipat A."/>
            <person name="Yamamoto H."/>
            <person name="Yamane K."/>
            <person name="Yasumoto K."/>
            <person name="Yata K."/>
            <person name="Yoshida K."/>
            <person name="Yoshikawa H.-F."/>
            <person name="Zumstein E."/>
            <person name="Yoshikawa H."/>
            <person name="Danchin A."/>
        </authorList>
    </citation>
    <scope>NUCLEOTIDE SEQUENCE [LARGE SCALE GENOMIC DNA]</scope>
    <source>
        <strain>168</strain>
    </source>
</reference>
<reference key="4">
    <citation type="journal article" date="1982" name="Mol. Gen. Genet.">
        <title>Purification and characterization of 30S ribosomal proteins from Bacillus subtilis: correlation to Escherichia coli 30S proteins.</title>
        <authorList>
            <person name="Higo K."/>
            <person name="Otaka E."/>
            <person name="Osawa S."/>
        </authorList>
    </citation>
    <scope>PROTEIN SEQUENCE OF 2-36</scope>
</reference>
<reference evidence="4 5" key="5">
    <citation type="journal article" date="2018" name="Proc. Natl. Acad. Sci. U.S.A.">
        <title>Structural basis for antibiotic resistance mediated by the Bacillus subtilis ABCF ATPase VmlR.</title>
        <authorList>
            <person name="Crowe-McAuliffe C."/>
            <person name="Graf M."/>
            <person name="Huter P."/>
            <person name="Takada H."/>
            <person name="Abdelshahid M."/>
            <person name="Novacek J."/>
            <person name="Murina V."/>
            <person name="Atkinson G.C."/>
            <person name="Hauryliuk V."/>
            <person name="Wilson D.N."/>
        </authorList>
    </citation>
    <scope>STRUCTURE BY ELECTRON MICROSCOPY (3.10 ANGSTROMS) OF 1-92 WITH AND WITHOUT VIRGINIAMYCIN M</scope>
    <scope>SUBUNIT</scope>
</reference>
<name>RS19_BACSU</name>
<keyword id="KW-0002">3D-structure</keyword>
<keyword id="KW-0903">Direct protein sequencing</keyword>
<keyword id="KW-1185">Reference proteome</keyword>
<keyword id="KW-0687">Ribonucleoprotein</keyword>
<keyword id="KW-0689">Ribosomal protein</keyword>
<keyword id="KW-0694">RNA-binding</keyword>
<keyword id="KW-0699">rRNA-binding</keyword>
<dbReference type="EMBL" id="U43929">
    <property type="protein sequence ID" value="AAC45960.1"/>
    <property type="molecule type" value="Genomic_DNA"/>
</dbReference>
<dbReference type="EMBL" id="D50302">
    <property type="protein sequence ID" value="BAA08835.1"/>
    <property type="molecule type" value="Genomic_DNA"/>
</dbReference>
<dbReference type="EMBL" id="AL009126">
    <property type="protein sequence ID" value="CAB11896.1"/>
    <property type="molecule type" value="Genomic_DNA"/>
</dbReference>
<dbReference type="PIR" id="B69701">
    <property type="entry name" value="B69701"/>
</dbReference>
<dbReference type="RefSeq" id="NP_388001.1">
    <property type="nucleotide sequence ID" value="NC_000964.3"/>
</dbReference>
<dbReference type="RefSeq" id="WP_003156472.1">
    <property type="nucleotide sequence ID" value="NZ_OZ025638.1"/>
</dbReference>
<dbReference type="PDB" id="3J9W">
    <property type="method" value="EM"/>
    <property type="resolution" value="3.90 A"/>
    <property type="chains" value="AS=1-92"/>
</dbReference>
<dbReference type="PDB" id="5NJT">
    <property type="method" value="EM"/>
    <property type="resolution" value="3.80 A"/>
    <property type="chains" value="S=4-83"/>
</dbReference>
<dbReference type="PDB" id="6HA1">
    <property type="method" value="EM"/>
    <property type="resolution" value="3.10 A"/>
    <property type="chains" value="s=1-92"/>
</dbReference>
<dbReference type="PDB" id="6HA8">
    <property type="method" value="EM"/>
    <property type="resolution" value="3.50 A"/>
    <property type="chains" value="s=1-92"/>
</dbReference>
<dbReference type="PDB" id="6HTQ">
    <property type="method" value="EM"/>
    <property type="resolution" value="4.50 A"/>
    <property type="chains" value="s=4-81"/>
</dbReference>
<dbReference type="PDB" id="7O5B">
    <property type="method" value="EM"/>
    <property type="resolution" value="3.33 A"/>
    <property type="chains" value="S=1-92"/>
</dbReference>
<dbReference type="PDB" id="7QGU">
    <property type="method" value="EM"/>
    <property type="resolution" value="4.75 A"/>
    <property type="chains" value="x=1-92"/>
</dbReference>
<dbReference type="PDB" id="7QH4">
    <property type="method" value="EM"/>
    <property type="resolution" value="5.45 A"/>
    <property type="chains" value="w=1-92"/>
</dbReference>
<dbReference type="PDB" id="7QV1">
    <property type="method" value="EM"/>
    <property type="resolution" value="3.50 A"/>
    <property type="chains" value="s=1-92"/>
</dbReference>
<dbReference type="PDB" id="7QV2">
    <property type="method" value="EM"/>
    <property type="resolution" value="3.50 A"/>
    <property type="chains" value="s=1-92"/>
</dbReference>
<dbReference type="PDB" id="7QV3">
    <property type="method" value="EM"/>
    <property type="resolution" value="5.14 A"/>
    <property type="chains" value="s=1-92"/>
</dbReference>
<dbReference type="PDB" id="8BUU">
    <property type="method" value="EM"/>
    <property type="resolution" value="2.90 A"/>
    <property type="chains" value="s=1-92"/>
</dbReference>
<dbReference type="PDB" id="8CDU">
    <property type="method" value="EM"/>
    <property type="resolution" value="3.10 A"/>
    <property type="chains" value="R=1-92"/>
</dbReference>
<dbReference type="PDB" id="8CDV">
    <property type="method" value="EM"/>
    <property type="resolution" value="4.73 A"/>
    <property type="chains" value="R=1-92"/>
</dbReference>
<dbReference type="PDB" id="8CEC">
    <property type="method" value="EM"/>
    <property type="resolution" value="3.57 A"/>
    <property type="chains" value="a=1-92"/>
</dbReference>
<dbReference type="PDB" id="8CED">
    <property type="method" value="EM"/>
    <property type="resolution" value="4.15 A"/>
    <property type="chains" value="R=1-92"/>
</dbReference>
<dbReference type="PDB" id="8CEE">
    <property type="method" value="EM"/>
    <property type="resolution" value="3.70 A"/>
    <property type="chains" value="R=1-92"/>
</dbReference>
<dbReference type="PDB" id="8QCQ">
    <property type="method" value="EM"/>
    <property type="resolution" value="2.30 A"/>
    <property type="chains" value="s=1-92"/>
</dbReference>
<dbReference type="PDB" id="8QPP">
    <property type="method" value="EM"/>
    <property type="resolution" value="3.40 A"/>
    <property type="chains" value="S=1-92"/>
</dbReference>
<dbReference type="PDB" id="8R55">
    <property type="method" value="EM"/>
    <property type="resolution" value="3.57 A"/>
    <property type="chains" value="S=1-92"/>
</dbReference>
<dbReference type="PDBsum" id="3J9W"/>
<dbReference type="PDBsum" id="5NJT"/>
<dbReference type="PDBsum" id="6HA1"/>
<dbReference type="PDBsum" id="6HA8"/>
<dbReference type="PDBsum" id="6HTQ"/>
<dbReference type="PDBsum" id="7O5B"/>
<dbReference type="PDBsum" id="7QGU"/>
<dbReference type="PDBsum" id="7QH4"/>
<dbReference type="PDBsum" id="7QV1"/>
<dbReference type="PDBsum" id="7QV2"/>
<dbReference type="PDBsum" id="7QV3"/>
<dbReference type="PDBsum" id="8BUU"/>
<dbReference type="PDBsum" id="8CDU"/>
<dbReference type="PDBsum" id="8CDV"/>
<dbReference type="PDBsum" id="8CEC"/>
<dbReference type="PDBsum" id="8CED"/>
<dbReference type="PDBsum" id="8CEE"/>
<dbReference type="PDBsum" id="8QCQ"/>
<dbReference type="PDBsum" id="8QPP"/>
<dbReference type="PDBsum" id="8R55"/>
<dbReference type="EMDB" id="EMD-0176"/>
<dbReference type="EMDB" id="EMD-0177"/>
<dbReference type="EMDB" id="EMD-0270"/>
<dbReference type="EMDB" id="EMD-12734"/>
<dbReference type="EMDB" id="EMD-14157"/>
<dbReference type="EMDB" id="EMD-14158"/>
<dbReference type="EMDB" id="EMD-14159"/>
<dbReference type="EMDB" id="EMD-16246"/>
<dbReference type="EMDB" id="EMD-16595"/>
<dbReference type="EMDB" id="EMD-16596"/>
<dbReference type="EMDB" id="EMD-16605"/>
<dbReference type="EMDB" id="EMD-16606"/>
<dbReference type="EMDB" id="EMD-16607"/>
<dbReference type="EMDB" id="EMD-18332"/>
<dbReference type="EMDB" id="EMD-3656"/>
<dbReference type="SMR" id="P21476"/>
<dbReference type="FunCoup" id="P21476">
    <property type="interactions" value="603"/>
</dbReference>
<dbReference type="IntAct" id="P21476">
    <property type="interactions" value="1"/>
</dbReference>
<dbReference type="STRING" id="224308.BSU01200"/>
<dbReference type="jPOST" id="P21476"/>
<dbReference type="PaxDb" id="224308-BSU01200"/>
<dbReference type="EnsemblBacteria" id="CAB11896">
    <property type="protein sequence ID" value="CAB11896"/>
    <property type="gene ID" value="BSU_01200"/>
</dbReference>
<dbReference type="GeneID" id="93079284"/>
<dbReference type="GeneID" id="936818"/>
<dbReference type="KEGG" id="bsu:BSU01200"/>
<dbReference type="PATRIC" id="fig|224308.179.peg.123"/>
<dbReference type="eggNOG" id="COG0185">
    <property type="taxonomic scope" value="Bacteria"/>
</dbReference>
<dbReference type="InParanoid" id="P21476"/>
<dbReference type="OrthoDB" id="9797833at2"/>
<dbReference type="PhylomeDB" id="P21476"/>
<dbReference type="BioCyc" id="BSUB:BSU01200-MONOMER"/>
<dbReference type="PRO" id="PR:P21476"/>
<dbReference type="Proteomes" id="UP000001570">
    <property type="component" value="Chromosome"/>
</dbReference>
<dbReference type="GO" id="GO:0005737">
    <property type="term" value="C:cytoplasm"/>
    <property type="evidence" value="ECO:0007669"/>
    <property type="project" value="UniProtKB-ARBA"/>
</dbReference>
<dbReference type="GO" id="GO:0015935">
    <property type="term" value="C:small ribosomal subunit"/>
    <property type="evidence" value="ECO:0007669"/>
    <property type="project" value="InterPro"/>
</dbReference>
<dbReference type="GO" id="GO:0019843">
    <property type="term" value="F:rRNA binding"/>
    <property type="evidence" value="ECO:0007669"/>
    <property type="project" value="UniProtKB-UniRule"/>
</dbReference>
<dbReference type="GO" id="GO:0003735">
    <property type="term" value="F:structural constituent of ribosome"/>
    <property type="evidence" value="ECO:0000318"/>
    <property type="project" value="GO_Central"/>
</dbReference>
<dbReference type="GO" id="GO:0000028">
    <property type="term" value="P:ribosomal small subunit assembly"/>
    <property type="evidence" value="ECO:0000318"/>
    <property type="project" value="GO_Central"/>
</dbReference>
<dbReference type="GO" id="GO:0006412">
    <property type="term" value="P:translation"/>
    <property type="evidence" value="ECO:0007669"/>
    <property type="project" value="UniProtKB-UniRule"/>
</dbReference>
<dbReference type="FunFam" id="3.30.860.10:FF:000001">
    <property type="entry name" value="30S ribosomal protein S19"/>
    <property type="match status" value="1"/>
</dbReference>
<dbReference type="Gene3D" id="3.30.860.10">
    <property type="entry name" value="30s Ribosomal Protein S19, Chain A"/>
    <property type="match status" value="1"/>
</dbReference>
<dbReference type="HAMAP" id="MF_00531">
    <property type="entry name" value="Ribosomal_uS19"/>
    <property type="match status" value="1"/>
</dbReference>
<dbReference type="InterPro" id="IPR002222">
    <property type="entry name" value="Ribosomal_uS19"/>
</dbReference>
<dbReference type="InterPro" id="IPR005732">
    <property type="entry name" value="Ribosomal_uS19_bac-type"/>
</dbReference>
<dbReference type="InterPro" id="IPR020934">
    <property type="entry name" value="Ribosomal_uS19_CS"/>
</dbReference>
<dbReference type="InterPro" id="IPR023575">
    <property type="entry name" value="Ribosomal_uS19_SF"/>
</dbReference>
<dbReference type="NCBIfam" id="TIGR01050">
    <property type="entry name" value="rpsS_bact"/>
    <property type="match status" value="1"/>
</dbReference>
<dbReference type="PANTHER" id="PTHR11880">
    <property type="entry name" value="RIBOSOMAL PROTEIN S19P FAMILY MEMBER"/>
    <property type="match status" value="1"/>
</dbReference>
<dbReference type="PANTHER" id="PTHR11880:SF8">
    <property type="entry name" value="SMALL RIBOSOMAL SUBUNIT PROTEIN US19M"/>
    <property type="match status" value="1"/>
</dbReference>
<dbReference type="Pfam" id="PF00203">
    <property type="entry name" value="Ribosomal_S19"/>
    <property type="match status" value="1"/>
</dbReference>
<dbReference type="PIRSF" id="PIRSF002144">
    <property type="entry name" value="Ribosomal_S19"/>
    <property type="match status" value="1"/>
</dbReference>
<dbReference type="PRINTS" id="PR00975">
    <property type="entry name" value="RIBOSOMALS19"/>
</dbReference>
<dbReference type="SUPFAM" id="SSF54570">
    <property type="entry name" value="Ribosomal protein S19"/>
    <property type="match status" value="1"/>
</dbReference>
<dbReference type="PROSITE" id="PS00323">
    <property type="entry name" value="RIBOSOMAL_S19"/>
    <property type="match status" value="1"/>
</dbReference>
<protein>
    <recommendedName>
        <fullName evidence="3">Small ribosomal subunit protein uS19</fullName>
    </recommendedName>
    <alternativeName>
        <fullName>30S ribosomal protein S19</fullName>
        <shortName>BS19</shortName>
    </alternativeName>
</protein>
<comment type="function">
    <text>Protein S19 forms a complex with S13 that binds strongly to the 16S ribosomal RNA.</text>
</comment>
<comment type="subunit">
    <text evidence="1">Part of the 30S ribosomal subunit.</text>
</comment>
<comment type="similarity">
    <text evidence="3">Belongs to the universal ribosomal protein uS19 family.</text>
</comment>
<accession>P21476</accession>
<organism>
    <name type="scientific">Bacillus subtilis (strain 168)</name>
    <dbReference type="NCBI Taxonomy" id="224308"/>
    <lineage>
        <taxon>Bacteria</taxon>
        <taxon>Bacillati</taxon>
        <taxon>Bacillota</taxon>
        <taxon>Bacilli</taxon>
        <taxon>Bacillales</taxon>
        <taxon>Bacillaceae</taxon>
        <taxon>Bacillus</taxon>
    </lineage>
</organism>
<gene>
    <name type="primary">rpsS</name>
    <name type="ordered locus">BSU01200</name>
</gene>
<sequence length="92" mass="10583">MARSLKKGPFVDGHLMTKIEKLNETDKKQVVKTWSRRSTIFPQFIGHTIAVYDGRKHVPVFISEDMVGHKLGEFAPTRTYKGHASDDKKTRR</sequence>
<evidence type="ECO:0000269" key="1">
    <source>
    </source>
</evidence>
<evidence type="ECO:0000269" key="2">
    <source>
    </source>
</evidence>
<evidence type="ECO:0000305" key="3"/>
<evidence type="ECO:0007744" key="4">
    <source>
        <dbReference type="PDB" id="6HA1"/>
    </source>
</evidence>
<evidence type="ECO:0007744" key="5">
    <source>
        <dbReference type="PDB" id="6HA8"/>
    </source>
</evidence>
<evidence type="ECO:0007829" key="6">
    <source>
        <dbReference type="PDB" id="8CDU"/>
    </source>
</evidence>